<reference key="1">
    <citation type="journal article" date="2003" name="Lancet">
        <title>Genome sequence of Vibrio parahaemolyticus: a pathogenic mechanism distinct from that of V. cholerae.</title>
        <authorList>
            <person name="Makino K."/>
            <person name="Oshima K."/>
            <person name="Kurokawa K."/>
            <person name="Yokoyama K."/>
            <person name="Uda T."/>
            <person name="Tagomori K."/>
            <person name="Iijima Y."/>
            <person name="Najima M."/>
            <person name="Nakano M."/>
            <person name="Yamashita A."/>
            <person name="Kubota Y."/>
            <person name="Kimura S."/>
            <person name="Yasunaga T."/>
            <person name="Honda T."/>
            <person name="Shinagawa H."/>
            <person name="Hattori M."/>
            <person name="Iida T."/>
        </authorList>
    </citation>
    <scope>NUCLEOTIDE SEQUENCE [LARGE SCALE GENOMIC DNA]</scope>
    <source>
        <strain>RIMD 2210633</strain>
    </source>
</reference>
<evidence type="ECO:0000255" key="1">
    <source>
        <dbReference type="HAMAP-Rule" id="MF_00406"/>
    </source>
</evidence>
<comment type="function">
    <text evidence="1">Involved in unsaturated fatty acids biosynthesis. Catalyzes the dehydration of short chain beta-hydroxyacyl-ACPs and long chain saturated and unsaturated beta-hydroxyacyl-ACPs.</text>
</comment>
<comment type="catalytic activity">
    <reaction evidence="1">
        <text>a (3R)-hydroxyacyl-[ACP] = a (2E)-enoyl-[ACP] + H2O</text>
        <dbReference type="Rhea" id="RHEA:13097"/>
        <dbReference type="Rhea" id="RHEA-COMP:9925"/>
        <dbReference type="Rhea" id="RHEA-COMP:9945"/>
        <dbReference type="ChEBI" id="CHEBI:15377"/>
        <dbReference type="ChEBI" id="CHEBI:78784"/>
        <dbReference type="ChEBI" id="CHEBI:78827"/>
        <dbReference type="EC" id="4.2.1.59"/>
    </reaction>
</comment>
<comment type="subcellular location">
    <subcellularLocation>
        <location evidence="1">Cytoplasm</location>
    </subcellularLocation>
</comment>
<comment type="similarity">
    <text evidence="1">Belongs to the thioester dehydratase family. FabZ subfamily.</text>
</comment>
<keyword id="KW-0963">Cytoplasm</keyword>
<keyword id="KW-0441">Lipid A biosynthesis</keyword>
<keyword id="KW-0444">Lipid biosynthesis</keyword>
<keyword id="KW-0443">Lipid metabolism</keyword>
<keyword id="KW-0456">Lyase</keyword>
<sequence>MTTEKKTMNISEIQELLPHRYPFLLIDRVIDFQEAKYLHAIKNVSVNEPQFTGHFPQLPVFPGVLILEAMAQATGLLAFKSFGAPTENELYYFASVDGAKFRKPVVPGDQMVIEVEFLKERRGIAAFSGVAKVDGEVVCSAELKCARREF</sequence>
<dbReference type="EC" id="4.2.1.59" evidence="1"/>
<dbReference type="EMBL" id="BA000031">
    <property type="protein sequence ID" value="BAC60570.1"/>
    <property type="molecule type" value="Genomic_DNA"/>
</dbReference>
<dbReference type="RefSeq" id="NP_798686.1">
    <property type="nucleotide sequence ID" value="NC_004603.1"/>
</dbReference>
<dbReference type="RefSeq" id="WP_005456699.1">
    <property type="nucleotide sequence ID" value="NC_004603.1"/>
</dbReference>
<dbReference type="SMR" id="Q87ME8"/>
<dbReference type="GeneID" id="1189820"/>
<dbReference type="KEGG" id="vpa:VP2307"/>
<dbReference type="PATRIC" id="fig|223926.6.peg.2209"/>
<dbReference type="eggNOG" id="COG0764">
    <property type="taxonomic scope" value="Bacteria"/>
</dbReference>
<dbReference type="HOGENOM" id="CLU_078912_1_0_6"/>
<dbReference type="Proteomes" id="UP000002493">
    <property type="component" value="Chromosome 1"/>
</dbReference>
<dbReference type="GO" id="GO:0005737">
    <property type="term" value="C:cytoplasm"/>
    <property type="evidence" value="ECO:0007669"/>
    <property type="project" value="UniProtKB-SubCell"/>
</dbReference>
<dbReference type="GO" id="GO:0016020">
    <property type="term" value="C:membrane"/>
    <property type="evidence" value="ECO:0007669"/>
    <property type="project" value="GOC"/>
</dbReference>
<dbReference type="GO" id="GO:0019171">
    <property type="term" value="F:(3R)-hydroxyacyl-[acyl-carrier-protein] dehydratase activity"/>
    <property type="evidence" value="ECO:0007669"/>
    <property type="project" value="UniProtKB-EC"/>
</dbReference>
<dbReference type="GO" id="GO:0006633">
    <property type="term" value="P:fatty acid biosynthetic process"/>
    <property type="evidence" value="ECO:0007669"/>
    <property type="project" value="UniProtKB-UniRule"/>
</dbReference>
<dbReference type="GO" id="GO:0009245">
    <property type="term" value="P:lipid A biosynthetic process"/>
    <property type="evidence" value="ECO:0007669"/>
    <property type="project" value="UniProtKB-UniRule"/>
</dbReference>
<dbReference type="CDD" id="cd01288">
    <property type="entry name" value="FabZ"/>
    <property type="match status" value="1"/>
</dbReference>
<dbReference type="FunFam" id="3.10.129.10:FF:000001">
    <property type="entry name" value="3-hydroxyacyl-[acyl-carrier-protein] dehydratase FabZ"/>
    <property type="match status" value="1"/>
</dbReference>
<dbReference type="Gene3D" id="3.10.129.10">
    <property type="entry name" value="Hotdog Thioesterase"/>
    <property type="match status" value="1"/>
</dbReference>
<dbReference type="HAMAP" id="MF_00406">
    <property type="entry name" value="FabZ"/>
    <property type="match status" value="1"/>
</dbReference>
<dbReference type="InterPro" id="IPR013114">
    <property type="entry name" value="FabA_FabZ"/>
</dbReference>
<dbReference type="InterPro" id="IPR010084">
    <property type="entry name" value="FabZ"/>
</dbReference>
<dbReference type="InterPro" id="IPR029069">
    <property type="entry name" value="HotDog_dom_sf"/>
</dbReference>
<dbReference type="NCBIfam" id="TIGR01750">
    <property type="entry name" value="fabZ"/>
    <property type="match status" value="1"/>
</dbReference>
<dbReference type="NCBIfam" id="NF000582">
    <property type="entry name" value="PRK00006.1"/>
    <property type="match status" value="1"/>
</dbReference>
<dbReference type="PANTHER" id="PTHR30272">
    <property type="entry name" value="3-HYDROXYACYL-[ACYL-CARRIER-PROTEIN] DEHYDRATASE"/>
    <property type="match status" value="1"/>
</dbReference>
<dbReference type="PANTHER" id="PTHR30272:SF1">
    <property type="entry name" value="3-HYDROXYACYL-[ACYL-CARRIER-PROTEIN] DEHYDRATASE"/>
    <property type="match status" value="1"/>
</dbReference>
<dbReference type="Pfam" id="PF07977">
    <property type="entry name" value="FabA"/>
    <property type="match status" value="1"/>
</dbReference>
<dbReference type="SUPFAM" id="SSF54637">
    <property type="entry name" value="Thioesterase/thiol ester dehydrase-isomerase"/>
    <property type="match status" value="1"/>
</dbReference>
<protein>
    <recommendedName>
        <fullName evidence="1">3-hydroxyacyl-[acyl-carrier-protein] dehydratase FabZ</fullName>
        <ecNumber evidence="1">4.2.1.59</ecNumber>
    </recommendedName>
    <alternativeName>
        <fullName evidence="1">(3R)-hydroxymyristoyl-[acyl-carrier-protein] dehydratase</fullName>
        <shortName evidence="1">(3R)-hydroxymyristoyl-ACP dehydrase</shortName>
    </alternativeName>
    <alternativeName>
        <fullName evidence="1">Beta-hydroxyacyl-ACP dehydratase</fullName>
    </alternativeName>
</protein>
<name>FABZ_VIBPA</name>
<proteinExistence type="inferred from homology"/>
<organism>
    <name type="scientific">Vibrio parahaemolyticus serotype O3:K6 (strain RIMD 2210633)</name>
    <dbReference type="NCBI Taxonomy" id="223926"/>
    <lineage>
        <taxon>Bacteria</taxon>
        <taxon>Pseudomonadati</taxon>
        <taxon>Pseudomonadota</taxon>
        <taxon>Gammaproteobacteria</taxon>
        <taxon>Vibrionales</taxon>
        <taxon>Vibrionaceae</taxon>
        <taxon>Vibrio</taxon>
    </lineage>
</organism>
<accession>Q87ME8</accession>
<feature type="chain" id="PRO_0000091758" description="3-hydroxyacyl-[acyl-carrier-protein] dehydratase FabZ">
    <location>
        <begin position="1"/>
        <end position="150"/>
    </location>
</feature>
<feature type="active site" evidence="1">
    <location>
        <position position="54"/>
    </location>
</feature>
<gene>
    <name evidence="1" type="primary">fabZ</name>
    <name type="ordered locus">VP2307</name>
</gene>